<organism>
    <name type="scientific">Mus musculus</name>
    <name type="common">Mouse</name>
    <dbReference type="NCBI Taxonomy" id="10090"/>
    <lineage>
        <taxon>Eukaryota</taxon>
        <taxon>Metazoa</taxon>
        <taxon>Chordata</taxon>
        <taxon>Craniata</taxon>
        <taxon>Vertebrata</taxon>
        <taxon>Euteleostomi</taxon>
        <taxon>Mammalia</taxon>
        <taxon>Eutheria</taxon>
        <taxon>Euarchontoglires</taxon>
        <taxon>Glires</taxon>
        <taxon>Rodentia</taxon>
        <taxon>Myomorpha</taxon>
        <taxon>Muroidea</taxon>
        <taxon>Muridae</taxon>
        <taxon>Murinae</taxon>
        <taxon>Mus</taxon>
        <taxon>Mus</taxon>
    </lineage>
</organism>
<keyword id="KW-0025">Alternative splicing</keyword>
<keyword id="KW-0053">Apoptosis</keyword>
<keyword id="KW-0067">ATP-binding</keyword>
<keyword id="KW-0131">Cell cycle</keyword>
<keyword id="KW-0963">Cytoplasm</keyword>
<keyword id="KW-0206">Cytoskeleton</keyword>
<keyword id="KW-0227">DNA damage</keyword>
<keyword id="KW-0333">Golgi apparatus</keyword>
<keyword id="KW-0418">Kinase</keyword>
<keyword id="KW-0547">Nucleotide-binding</keyword>
<keyword id="KW-0539">Nucleus</keyword>
<keyword id="KW-0597">Phosphoprotein</keyword>
<keyword id="KW-1185">Reference proteome</keyword>
<keyword id="KW-0677">Repeat</keyword>
<keyword id="KW-0723">Serine/threonine-protein kinase</keyword>
<keyword id="KW-0808">Transferase</keyword>
<accession>Q60806</accession>
<accession>Q60822</accession>
<accession>Q9R009</accession>
<dbReference type="EC" id="2.7.11.21"/>
<dbReference type="EMBL" id="U21392">
    <property type="protein sequence ID" value="AAC52191.1"/>
    <property type="molecule type" value="mRNA"/>
</dbReference>
<dbReference type="EMBL" id="U22434">
    <property type="protein sequence ID" value="AAC52192.1"/>
    <property type="molecule type" value="Genomic_DNA"/>
</dbReference>
<dbReference type="EMBL" id="AF136586">
    <property type="protein sequence ID" value="AAF08369.1"/>
    <property type="molecule type" value="mRNA"/>
</dbReference>
<dbReference type="CCDS" id="CCDS18529.1">
    <molecule id="Q60806-2"/>
</dbReference>
<dbReference type="PIR" id="A57286">
    <property type="entry name" value="A57286"/>
</dbReference>
<dbReference type="SMR" id="Q60806"/>
<dbReference type="FunCoup" id="Q60806">
    <property type="interactions" value="147"/>
</dbReference>
<dbReference type="STRING" id="10090.ENSMUSP00000076130"/>
<dbReference type="iPTMnet" id="Q60806"/>
<dbReference type="PhosphoSitePlus" id="Q60806"/>
<dbReference type="PaxDb" id="10090-ENSMUSP00000076130"/>
<dbReference type="ProteomicsDB" id="289546">
    <molecule id="Q60806-1"/>
</dbReference>
<dbReference type="ProteomicsDB" id="289547">
    <molecule id="Q60806-2"/>
</dbReference>
<dbReference type="AGR" id="MGI:109604"/>
<dbReference type="MGI" id="MGI:109604">
    <property type="gene designation" value="Plk3"/>
</dbReference>
<dbReference type="eggNOG" id="KOG0575">
    <property type="taxonomic scope" value="Eukaryota"/>
</dbReference>
<dbReference type="InParanoid" id="Q60806"/>
<dbReference type="BRENDA" id="2.7.11.21">
    <property type="organism ID" value="3474"/>
</dbReference>
<dbReference type="Reactome" id="R-MMU-6804115">
    <property type="pathway name" value="TP53 regulates transcription of additional cell cycle genes whose exact role in the p53 pathway remain uncertain"/>
</dbReference>
<dbReference type="Reactome" id="R-MMU-6804756">
    <property type="pathway name" value="Regulation of TP53 Activity through Phosphorylation"/>
</dbReference>
<dbReference type="PRO" id="PR:Q60806"/>
<dbReference type="Proteomes" id="UP000000589">
    <property type="component" value="Unplaced"/>
</dbReference>
<dbReference type="RNAct" id="Q60806">
    <property type="molecule type" value="protein"/>
</dbReference>
<dbReference type="GO" id="GO:0005813">
    <property type="term" value="C:centrosome"/>
    <property type="evidence" value="ECO:0000250"/>
    <property type="project" value="UniProtKB"/>
</dbReference>
<dbReference type="GO" id="GO:0000785">
    <property type="term" value="C:chromatin"/>
    <property type="evidence" value="ECO:0000314"/>
    <property type="project" value="MGI"/>
</dbReference>
<dbReference type="GO" id="GO:0005737">
    <property type="term" value="C:cytoplasm"/>
    <property type="evidence" value="ECO:0000250"/>
    <property type="project" value="UniProtKB"/>
</dbReference>
<dbReference type="GO" id="GO:0005795">
    <property type="term" value="C:Golgi stack"/>
    <property type="evidence" value="ECO:0000250"/>
    <property type="project" value="UniProtKB"/>
</dbReference>
<dbReference type="GO" id="GO:0005730">
    <property type="term" value="C:nucleolus"/>
    <property type="evidence" value="ECO:0000250"/>
    <property type="project" value="UniProtKB"/>
</dbReference>
<dbReference type="GO" id="GO:0005634">
    <property type="term" value="C:nucleus"/>
    <property type="evidence" value="ECO:0000250"/>
    <property type="project" value="UniProtKB"/>
</dbReference>
<dbReference type="GO" id="GO:0005524">
    <property type="term" value="F:ATP binding"/>
    <property type="evidence" value="ECO:0007669"/>
    <property type="project" value="UniProtKB-KW"/>
</dbReference>
<dbReference type="GO" id="GO:0002039">
    <property type="term" value="F:p53 binding"/>
    <property type="evidence" value="ECO:0000250"/>
    <property type="project" value="UniProtKB"/>
</dbReference>
<dbReference type="GO" id="GO:0106310">
    <property type="term" value="F:protein serine kinase activity"/>
    <property type="evidence" value="ECO:0007669"/>
    <property type="project" value="RHEA"/>
</dbReference>
<dbReference type="GO" id="GO:0004674">
    <property type="term" value="F:protein serine/threonine kinase activity"/>
    <property type="evidence" value="ECO:0000314"/>
    <property type="project" value="UniProtKB"/>
</dbReference>
<dbReference type="GO" id="GO:0006915">
    <property type="term" value="P:apoptotic process"/>
    <property type="evidence" value="ECO:0007669"/>
    <property type="project" value="UniProtKB-KW"/>
</dbReference>
<dbReference type="GO" id="GO:0031122">
    <property type="term" value="P:cytoplasmic microtubule organization"/>
    <property type="evidence" value="ECO:0000250"/>
    <property type="project" value="UniProtKB"/>
</dbReference>
<dbReference type="GO" id="GO:0006974">
    <property type="term" value="P:DNA damage response"/>
    <property type="evidence" value="ECO:0000315"/>
    <property type="project" value="UniProtKB"/>
</dbReference>
<dbReference type="GO" id="GO:0000082">
    <property type="term" value="P:G1/S transition of mitotic cell cycle"/>
    <property type="evidence" value="ECO:0000250"/>
    <property type="project" value="UniProtKB"/>
</dbReference>
<dbReference type="GO" id="GO:0090166">
    <property type="term" value="P:Golgi disassembly"/>
    <property type="evidence" value="ECO:0000250"/>
    <property type="project" value="UniProtKB"/>
</dbReference>
<dbReference type="GO" id="GO:0044819">
    <property type="term" value="P:mitotic G1/S transition checkpoint signaling"/>
    <property type="evidence" value="ECO:0000315"/>
    <property type="project" value="UniProtKB"/>
</dbReference>
<dbReference type="GO" id="GO:0043066">
    <property type="term" value="P:negative regulation of apoptotic process"/>
    <property type="evidence" value="ECO:0000250"/>
    <property type="project" value="UniProtKB"/>
</dbReference>
<dbReference type="GO" id="GO:0051898">
    <property type="term" value="P:negative regulation of phosphatidylinositol 3-kinase/protein kinase B signal transduction"/>
    <property type="evidence" value="ECO:0000315"/>
    <property type="project" value="UniProtKB"/>
</dbReference>
<dbReference type="GO" id="GO:0000122">
    <property type="term" value="P:negative regulation of transcription by RNA polymerase II"/>
    <property type="evidence" value="ECO:0000250"/>
    <property type="project" value="UniProtKB"/>
</dbReference>
<dbReference type="GO" id="GO:0090316">
    <property type="term" value="P:positive regulation of intracellular protein transport"/>
    <property type="evidence" value="ECO:0000250"/>
    <property type="project" value="UniProtKB"/>
</dbReference>
<dbReference type="GO" id="GO:0032436">
    <property type="term" value="P:positive regulation of proteasomal ubiquitin-dependent protein catabolic process"/>
    <property type="evidence" value="ECO:0000250"/>
    <property type="project" value="UniProtKB"/>
</dbReference>
<dbReference type="GO" id="GO:0051302">
    <property type="term" value="P:regulation of cell division"/>
    <property type="evidence" value="ECO:0000250"/>
    <property type="project" value="UniProtKB"/>
</dbReference>
<dbReference type="GO" id="GO:0006970">
    <property type="term" value="P:response to osmotic stress"/>
    <property type="evidence" value="ECO:0000250"/>
    <property type="project" value="UniProtKB"/>
</dbReference>
<dbReference type="GO" id="GO:0009314">
    <property type="term" value="P:response to radiation"/>
    <property type="evidence" value="ECO:0000250"/>
    <property type="project" value="UniProtKB"/>
</dbReference>
<dbReference type="GO" id="GO:0000302">
    <property type="term" value="P:response to reactive oxygen species"/>
    <property type="evidence" value="ECO:0000250"/>
    <property type="project" value="UniProtKB"/>
</dbReference>
<dbReference type="CDD" id="cd13118">
    <property type="entry name" value="POLO_box_1"/>
    <property type="match status" value="1"/>
</dbReference>
<dbReference type="CDD" id="cd13117">
    <property type="entry name" value="POLO_box_2"/>
    <property type="match status" value="1"/>
</dbReference>
<dbReference type="CDD" id="cd14189">
    <property type="entry name" value="STKc_PLK3"/>
    <property type="match status" value="1"/>
</dbReference>
<dbReference type="FunFam" id="1.10.510.10:FF:000189">
    <property type="entry name" value="Serine/threonine-protein kinase PLK"/>
    <property type="match status" value="1"/>
</dbReference>
<dbReference type="FunFam" id="3.30.1120.30:FF:000001">
    <property type="entry name" value="Serine/threonine-protein kinase PLK"/>
    <property type="match status" value="1"/>
</dbReference>
<dbReference type="FunFam" id="3.30.200.20:FF:000091">
    <property type="entry name" value="Serine/threonine-protein kinase PLK"/>
    <property type="match status" value="1"/>
</dbReference>
<dbReference type="Gene3D" id="3.30.200.20">
    <property type="entry name" value="Phosphorylase Kinase, domain 1"/>
    <property type="match status" value="1"/>
</dbReference>
<dbReference type="Gene3D" id="3.30.1120.30">
    <property type="entry name" value="POLO box domain"/>
    <property type="match status" value="2"/>
</dbReference>
<dbReference type="Gene3D" id="1.10.510.10">
    <property type="entry name" value="Transferase(Phosphotransferase) domain 1"/>
    <property type="match status" value="1"/>
</dbReference>
<dbReference type="InterPro" id="IPR011009">
    <property type="entry name" value="Kinase-like_dom_sf"/>
</dbReference>
<dbReference type="InterPro" id="IPR042703">
    <property type="entry name" value="PLK3_STKc"/>
</dbReference>
<dbReference type="InterPro" id="IPR033701">
    <property type="entry name" value="POLO_box_1"/>
</dbReference>
<dbReference type="InterPro" id="IPR033695">
    <property type="entry name" value="POLO_box_2"/>
</dbReference>
<dbReference type="InterPro" id="IPR000959">
    <property type="entry name" value="POLO_box_dom"/>
</dbReference>
<dbReference type="InterPro" id="IPR036947">
    <property type="entry name" value="POLO_box_dom_sf"/>
</dbReference>
<dbReference type="InterPro" id="IPR000719">
    <property type="entry name" value="Prot_kinase_dom"/>
</dbReference>
<dbReference type="InterPro" id="IPR017441">
    <property type="entry name" value="Protein_kinase_ATP_BS"/>
</dbReference>
<dbReference type="InterPro" id="IPR008271">
    <property type="entry name" value="Ser/Thr_kinase_AS"/>
</dbReference>
<dbReference type="PANTHER" id="PTHR24345">
    <property type="entry name" value="SERINE/THREONINE-PROTEIN KINASE PLK"/>
    <property type="match status" value="1"/>
</dbReference>
<dbReference type="PANTHER" id="PTHR24345:SF42">
    <property type="entry name" value="SERINE_THREONINE-PROTEIN KINASE PLK3"/>
    <property type="match status" value="1"/>
</dbReference>
<dbReference type="Pfam" id="PF00069">
    <property type="entry name" value="Pkinase"/>
    <property type="match status" value="1"/>
</dbReference>
<dbReference type="Pfam" id="PF00659">
    <property type="entry name" value="POLO_box"/>
    <property type="match status" value="2"/>
</dbReference>
<dbReference type="SMART" id="SM00220">
    <property type="entry name" value="S_TKc"/>
    <property type="match status" value="1"/>
</dbReference>
<dbReference type="SUPFAM" id="SSF82615">
    <property type="entry name" value="Polo-box domain"/>
    <property type="match status" value="2"/>
</dbReference>
<dbReference type="SUPFAM" id="SSF56112">
    <property type="entry name" value="Protein kinase-like (PK-like)"/>
    <property type="match status" value="1"/>
</dbReference>
<dbReference type="PROSITE" id="PS50078">
    <property type="entry name" value="POLO_BOX"/>
    <property type="match status" value="2"/>
</dbReference>
<dbReference type="PROSITE" id="PS00107">
    <property type="entry name" value="PROTEIN_KINASE_ATP"/>
    <property type="match status" value="1"/>
</dbReference>
<dbReference type="PROSITE" id="PS50011">
    <property type="entry name" value="PROTEIN_KINASE_DOM"/>
    <property type="match status" value="1"/>
</dbReference>
<dbReference type="PROSITE" id="PS00108">
    <property type="entry name" value="PROTEIN_KINASE_ST"/>
    <property type="match status" value="1"/>
</dbReference>
<gene>
    <name type="primary">Plk3</name>
    <name type="synonym">Cnk</name>
    <name type="synonym">Fnk</name>
</gene>
<name>PLK3_MOUSE</name>
<proteinExistence type="evidence at protein level"/>
<sequence length="631" mass="70012">MEPAAGFLSPRPFPRAAVPSAPPAGPGPPANASPRSEPEVLAGPRAPDPPGRLITDPLSGRTYTKGRLLGKGGFARCYEATDTESGIAYAVKVIPQSRVAKPHQREKILNEIELHRDLQHRHIVRFSHHFEDADNIYIFLELCSRKSLAHIWKARHTLLEPEVRYYLRQILSGLKYLHQRGILHRDLKLGNFFITDNMELKVGDFGLAARLEPPEQRKKTICGTPNYVAPEVLLRQGHGPEADVWSLGCVMYTLLCGSPPFETADLKETYRCIKQVHYTLPASLSLPARQLLAAILRASPRDRPSIEQILRHDFFTKGYTPDRLPVSSCVTVPDLTPPNPARSLFAKVTKSLFGRKKNKNKNHSEDQDNVSCLAPVVSGQAPASLIETAAEDSSPRGTLASSGDGFEEGLTVATVVESALCALRNCVAFMPPAEQNPAPLAQPEPLVWVSKWVDYSNKFGFGYQLSSRRVAVLFNDGTHMALSANRKTVHYNPTSTKHFSFSMGSVPRALQPQLGILRYFASYMEQHLMKGGDLPSVEEAEVPAPPLLLQWVKTDQALLMLFSDGTVQVNFYGDHTKLILSGWEPLLVTFVARNRSACTYLASHLRQLGCSPDLRQRLRYALRLLRDQSPA</sequence>
<protein>
    <recommendedName>
        <fullName>Serine/threonine-protein kinase PLK3</fullName>
        <ecNumber>2.7.11.21</ecNumber>
    </recommendedName>
    <alternativeName>
        <fullName>Cytokine-inducible serine/threonine-protein kinase</fullName>
    </alternativeName>
    <alternativeName>
        <fullName>FGF-inducible kinase</fullName>
    </alternativeName>
    <alternativeName>
        <fullName>Polo-like kinase 3</fullName>
        <shortName>PLK-3</shortName>
    </alternativeName>
</protein>
<evidence type="ECO:0000250" key="1"/>
<evidence type="ECO:0000255" key="2">
    <source>
        <dbReference type="PROSITE-ProRule" id="PRU00154"/>
    </source>
</evidence>
<evidence type="ECO:0000255" key="3">
    <source>
        <dbReference type="PROSITE-ProRule" id="PRU00159"/>
    </source>
</evidence>
<evidence type="ECO:0000255" key="4">
    <source>
        <dbReference type="PROSITE-ProRule" id="PRU10027"/>
    </source>
</evidence>
<evidence type="ECO:0000256" key="5">
    <source>
        <dbReference type="SAM" id="MobiDB-lite"/>
    </source>
</evidence>
<evidence type="ECO:0000269" key="6">
    <source>
    </source>
</evidence>
<evidence type="ECO:0000269" key="7">
    <source>
    </source>
</evidence>
<evidence type="ECO:0000269" key="8">
    <source>
    </source>
</evidence>
<evidence type="ECO:0000269" key="9">
    <source>
    </source>
</evidence>
<evidence type="ECO:0000269" key="10">
    <source>
    </source>
</evidence>
<evidence type="ECO:0000303" key="11">
    <source>
    </source>
</evidence>
<evidence type="ECO:0000305" key="12"/>
<feature type="chain" id="PRO_0000086565" description="Serine/threonine-protein kinase PLK3">
    <location>
        <begin position="1"/>
        <end position="631"/>
    </location>
</feature>
<feature type="domain" description="Protein kinase" evidence="3">
    <location>
        <begin position="63"/>
        <end position="315"/>
    </location>
</feature>
<feature type="domain" description="POLO box 1" evidence="2">
    <location>
        <begin position="448"/>
        <end position="526"/>
    </location>
</feature>
<feature type="domain" description="POLO box 2" evidence="2">
    <location>
        <begin position="547"/>
        <end position="630"/>
    </location>
</feature>
<feature type="region of interest" description="Disordered" evidence="5">
    <location>
        <begin position="1"/>
        <end position="59"/>
    </location>
</feature>
<feature type="compositionally biased region" description="Pro residues" evidence="5">
    <location>
        <begin position="20"/>
        <end position="31"/>
    </location>
</feature>
<feature type="active site" description="Proton acceptor" evidence="3 4">
    <location>
        <position position="186"/>
    </location>
</feature>
<feature type="binding site" evidence="3">
    <location>
        <begin position="69"/>
        <end position="77"/>
    </location>
    <ligand>
        <name>ATP</name>
        <dbReference type="ChEBI" id="CHEBI:30616"/>
    </ligand>
</feature>
<feature type="binding site" evidence="3">
    <location>
        <position position="92"/>
    </location>
    <ligand>
        <name>ATP</name>
        <dbReference type="ChEBI" id="CHEBI:30616"/>
    </ligand>
</feature>
<feature type="splice variant" id="VSP_004927" description="In isoform 2." evidence="11">
    <original>L</original>
    <variation>LVSGLMRTSIGHPDVRPE</variation>
    <location>
        <position position="373"/>
    </location>
</feature>
<feature type="sequence conflict" description="In Ref. 2; AAF08369." evidence="12" ref="2">
    <original>I</original>
    <variation>V</variation>
    <location>
        <position position="386"/>
    </location>
</feature>
<reference key="1">
    <citation type="journal article" date="1995" name="J. Biol. Chem.">
        <title>Identification by targeted differential display of an immediate early gene encoding a putative serine/threonine kinase.</title>
        <authorList>
            <person name="Donohue P.J."/>
            <person name="Alberts G.F."/>
            <person name="Guo Y."/>
            <person name="Winkles J.A."/>
        </authorList>
    </citation>
    <scope>NUCLEOTIDE SEQUENCE [GENOMIC DNA / MRNA] (ISOFORM 1)</scope>
    <source>
        <strain>NIH Swiss</strain>
    </source>
</reference>
<reference key="2">
    <citation type="journal article" date="2000" name="Oncogene">
        <title>Adhesion induced expression of the serine/threonine kinase Fnk in human macrophages.</title>
        <authorList>
            <person name="Holtrich U."/>
            <person name="Wolf G."/>
            <person name="Yuan J."/>
            <person name="Bereiter-Hahn J."/>
            <person name="Karn T."/>
            <person name="Weiler M."/>
            <person name="Kauselmann G."/>
            <person name="Rehli M."/>
            <person name="Andreesen R."/>
            <person name="Kaufmann M."/>
            <person name="Kuhl D."/>
            <person name="Strebhardt K."/>
        </authorList>
    </citation>
    <scope>NUCLEOTIDE SEQUENCE [MRNA] OF 333-437 (ISOFORM 2)</scope>
    <source>
        <strain>NIH Swiss</strain>
    </source>
</reference>
<reference key="3">
    <citation type="journal article" date="1998" name="Biochem. J.">
        <title>Expression and phosphorylation of fibroblast-growth-factor-inducible kinase (Fnk) during cell-cycle progression.</title>
        <authorList>
            <person name="Chase D."/>
            <person name="Feng Y."/>
            <person name="Hanshew B."/>
            <person name="Winkles J.A."/>
            <person name="Longo D.L."/>
            <person name="Ferris D.K."/>
        </authorList>
    </citation>
    <scope>FUNCTION</scope>
    <scope>PHOSPHORYLATION</scope>
</reference>
<reference key="4">
    <citation type="journal article" date="2008" name="Cancer Res.">
        <title>Polo-like kinase 3 functions as a tumor suppressor and is a negative regulator of hypoxia-inducible factor-1 alpha under hypoxic conditions.</title>
        <authorList>
            <person name="Yang Y."/>
            <person name="Bai J."/>
            <person name="Shen R."/>
            <person name="Brown S.A."/>
            <person name="Komissarova E."/>
            <person name="Huang Y."/>
            <person name="Jiang N."/>
            <person name="Alberts G.F."/>
            <person name="Costa M."/>
            <person name="Lu L."/>
            <person name="Winkles J.A."/>
            <person name="Dai W."/>
        </authorList>
    </citation>
    <scope>DISRUPTION PHENOTYPE</scope>
</reference>
<reference key="5">
    <citation type="journal article" date="2009" name="Mol. Cell. Biol.">
        <title>Stimulation of polo-like kinase 3 mRNA decay by tristetraprolin.</title>
        <authorList>
            <person name="Horner T.J."/>
            <person name="Lai W.S."/>
            <person name="Stumpo D.J."/>
            <person name="Blackshear P.J."/>
        </authorList>
    </citation>
    <scope>INDUCTION</scope>
</reference>
<reference key="6">
    <citation type="journal article" date="2010" name="J. Biol. Chem.">
        <title>Regulation of PTEN stability and activity by Plk3.</title>
        <authorList>
            <person name="Xu D."/>
            <person name="Yao Y."/>
            <person name="Jiang X."/>
            <person name="Lu L."/>
            <person name="Dai W."/>
        </authorList>
    </citation>
    <scope>FUNCTION IN PHOSPHORYLATION OF PTEN</scope>
</reference>
<reference key="7">
    <citation type="journal article" date="2011" name="Mutat. Res.">
        <title>Absence of polo-like kinase 3 in mice stabilizes Cdc25A after DNA damage but is not sufficient to produce tumors.</title>
        <authorList>
            <person name="Myer D.L."/>
            <person name="Robbins S.B."/>
            <person name="Yin M."/>
            <person name="Boivin G.P."/>
            <person name="Liu Y."/>
            <person name="Greis K.D."/>
            <person name="Bahassi el M."/>
            <person name="Stambrook P.J."/>
        </authorList>
    </citation>
    <scope>FUNCTION IN PHOSPHORYLATION OF CDC25A</scope>
    <scope>DISRUPTION PHENOTYPE</scope>
</reference>
<comment type="function">
    <text evidence="8 9 10">Serine/threonine-protein kinase involved in cell cycle regulation, response to stress and Golgi disassembly. Polo-like kinases act by binding and phosphorylating proteins that are already phosphorylated on a specific motif recognized by the POLO box domains. Phosphorylates ATF2, BCL2L1, CDC25A, CDC25C, CHEK2, HIF1A, JUN, p53/TP53, p73/TP73, PTEN, TOP2A and VRK1. Involved in cell cycle regulation: required for entry into S phase and cytokinesis. Phosphorylates BCL2L1, leading to regulate the G2 checkpoint and progression to cytokinesis during mitosis. Plays a key role in response to stress: rapidly activated upon stress stimulation, such as ionizing radiation, reactive oxygen species (ROS), hyperosmotic stress, UV irradiation and hypoxia. Involved in DNA damage response and G1/S transition checkpoint by phosphorylating CDC25A, p53/TP53 and p73/TP73. Phosphorylates p53/TP53 in response to reactive oxygen species (ROS), thereby promoting p53/TP53-mediated apoptosis. Phosphorylates CHEK2 in response to DNA damage, promoting the G2/M transition checkpoint. Phosphorylates the transcription factor p73/TP73 in response to DNA damage, leading to inhibit p73/TP73-mediated transcriptional activation and pro-apoptotic functions. Phosphorylates HIF1A and JUN is response to hypoxia. Phosphorylates ATF2 following hyperosmotic stress in corneal epithelium. Also involved in Golgi disassembly during the cell cycle: part of a MEK1/MAP2K1-dependent pathway that induces Golgi fragmentation during mitosis by mediating phosphorylation of VRK1. May participate in endomitotic cell cycle, a form of mitosis in which both karyokinesis and cytokinesis are interrupted and is a hallmark of megakaryocyte differentiation, via its interaction with CIB1.</text>
</comment>
<comment type="catalytic activity">
    <reaction>
        <text>L-seryl-[protein] + ATP = O-phospho-L-seryl-[protein] + ADP + H(+)</text>
        <dbReference type="Rhea" id="RHEA:17989"/>
        <dbReference type="Rhea" id="RHEA-COMP:9863"/>
        <dbReference type="Rhea" id="RHEA-COMP:11604"/>
        <dbReference type="ChEBI" id="CHEBI:15378"/>
        <dbReference type="ChEBI" id="CHEBI:29999"/>
        <dbReference type="ChEBI" id="CHEBI:30616"/>
        <dbReference type="ChEBI" id="CHEBI:83421"/>
        <dbReference type="ChEBI" id="CHEBI:456216"/>
        <dbReference type="EC" id="2.7.11.21"/>
    </reaction>
</comment>
<comment type="catalytic activity">
    <reaction>
        <text>L-threonyl-[protein] + ATP = O-phospho-L-threonyl-[protein] + ADP + H(+)</text>
        <dbReference type="Rhea" id="RHEA:46608"/>
        <dbReference type="Rhea" id="RHEA-COMP:11060"/>
        <dbReference type="Rhea" id="RHEA-COMP:11605"/>
        <dbReference type="ChEBI" id="CHEBI:15378"/>
        <dbReference type="ChEBI" id="CHEBI:30013"/>
        <dbReference type="ChEBI" id="CHEBI:30616"/>
        <dbReference type="ChEBI" id="CHEBI:61977"/>
        <dbReference type="ChEBI" id="CHEBI:456216"/>
        <dbReference type="EC" id="2.7.11.21"/>
    </reaction>
</comment>
<comment type="subunit">
    <text evidence="1">Interacts (via the POLO-box domain) with CIB1; leading to inhibit PLK3 kinase activity. Interacts with GOLGB1 (By similarity).</text>
</comment>
<comment type="subcellular location">
    <subcellularLocation>
        <location evidence="1">Cytoplasm</location>
    </subcellularLocation>
    <subcellularLocation>
        <location evidence="1">Nucleus</location>
    </subcellularLocation>
    <subcellularLocation>
        <location evidence="1">Nucleus</location>
        <location evidence="1">Nucleolus</location>
    </subcellularLocation>
    <subcellularLocation>
        <location evidence="1">Golgi apparatus</location>
    </subcellularLocation>
    <subcellularLocation>
        <location evidence="1">Cytoplasm</location>
        <location evidence="1">Cytoskeleton</location>
        <location evidence="1">Microtubule organizing center</location>
        <location evidence="1">Centrosome</location>
    </subcellularLocation>
    <text evidence="1">Translocates to the nucleus upon cisplatin treatment. Localizes to the Golgi apparatus during interphase (By similarity).</text>
</comment>
<comment type="alternative products">
    <event type="alternative splicing"/>
    <isoform>
        <id>Q60806-1</id>
        <name>1</name>
        <sequence type="displayed"/>
    </isoform>
    <isoform>
        <id>Q60806-2</id>
        <name>2</name>
        <sequence type="described" ref="VSP_004927"/>
    </isoform>
</comment>
<comment type="tissue specificity">
    <text>Expressed in skin.</text>
</comment>
<comment type="induction">
    <text evidence="7">Negatively regulated by TTP family members: TTP binds to the 3'-untranslated region (3'-UTR) of PLK3 mRNAs, contributing to the rapid degradation of transcripts.</text>
</comment>
<comment type="domain">
    <text evidence="1">The POLO box domains act as phosphopeptide-binding module that recognizes and binds serine-[phosphothreonine/phosphoserine]-(proline/X) motifs. PLK3 recognizes and binds docking proteins that are already phosphorylated on these motifs, and then phosphorylates them. The POLO box domains mediate localization to the centrosome (By similarity).</text>
</comment>
<comment type="PTM">
    <text evidence="1 10">Phosphorylated in an ATM-dependent manner following DNA damage (By similarity). Phosphorylated as cells enter mitosis and dephosphorylated as cells exit mitosis.</text>
</comment>
<comment type="disruption phenotype">
    <text evidence="6 9">Aging mice display increased weight. Cells display defects in the G1/S cell cycle checkpoint and CDC25A protein is more stable. According to a report, they also develop tumors with the highest incidence in the lung but also in the kidney, the liver and the uterus (PubMed:18519666). However, increased tumorigenesis was not observed by another report (PubMed:21376736). The differences observed might be due to the different mouse strain background used in the 2 experiments.</text>
</comment>
<comment type="similarity">
    <text evidence="3">Belongs to the protein kinase superfamily. Ser/Thr protein kinase family. CDC5/Polo subfamily.</text>
</comment>